<name>RL23A_TOBAC</name>
<proteinExistence type="evidence at protein level"/>
<reference key="1">
    <citation type="journal article" date="1994" name="Plant Mol. Biol.">
        <title>Developmental and environmental regulation of two ribosomal protein genes in tobacco.</title>
        <authorList>
            <person name="Gao J."/>
            <person name="Kim S.R."/>
            <person name="Chung Y.Y."/>
            <person name="Lee J.M."/>
            <person name="An G."/>
        </authorList>
    </citation>
    <scope>NUCLEOTIDE SEQUENCE [MRNA]</scope>
</reference>
<protein>
    <recommendedName>
        <fullName evidence="3">Large ribosomal subunit protein uL23</fullName>
    </recommendedName>
    <alternativeName>
        <fullName>60S ribosomal protein L23a</fullName>
    </alternativeName>
    <alternativeName>
        <fullName>L25</fullName>
    </alternativeName>
</protein>
<dbReference type="EMBL" id="L18908">
    <property type="protein sequence ID" value="AAA53296.1"/>
    <property type="molecule type" value="mRNA"/>
</dbReference>
<dbReference type="PIR" id="S48026">
    <property type="entry name" value="S48026"/>
</dbReference>
<dbReference type="RefSeq" id="XP_016475086.1">
    <property type="nucleotide sequence ID" value="XM_016619600.1"/>
</dbReference>
<dbReference type="PDB" id="8AZW">
    <property type="method" value="EM"/>
    <property type="resolution" value="2.14 A"/>
    <property type="chains" value="k=1-154"/>
</dbReference>
<dbReference type="PDB" id="8B2L">
    <property type="method" value="EM"/>
    <property type="resolution" value="2.20 A"/>
    <property type="chains" value="k3=1-154"/>
</dbReference>
<dbReference type="PDBsum" id="8AZW"/>
<dbReference type="PDBsum" id="8B2L"/>
<dbReference type="EMDB" id="EMD-15773"/>
<dbReference type="EMDB" id="EMD-15806"/>
<dbReference type="SMR" id="Q07761"/>
<dbReference type="STRING" id="4097.Q07761"/>
<dbReference type="PaxDb" id="4097-Q07761"/>
<dbReference type="KEGG" id="nta:107796789"/>
<dbReference type="OMA" id="STHFRCA"/>
<dbReference type="OrthoDB" id="1226096at2759"/>
<dbReference type="Proteomes" id="UP000084051">
    <property type="component" value="Unplaced"/>
</dbReference>
<dbReference type="GO" id="GO:0022625">
    <property type="term" value="C:cytosolic large ribosomal subunit"/>
    <property type="evidence" value="ECO:0000318"/>
    <property type="project" value="GO_Central"/>
</dbReference>
<dbReference type="GO" id="GO:0003729">
    <property type="term" value="F:mRNA binding"/>
    <property type="evidence" value="ECO:0007669"/>
    <property type="project" value="UniProtKB-ARBA"/>
</dbReference>
<dbReference type="GO" id="GO:0019843">
    <property type="term" value="F:rRNA binding"/>
    <property type="evidence" value="ECO:0007669"/>
    <property type="project" value="UniProtKB-KW"/>
</dbReference>
<dbReference type="GO" id="GO:0003735">
    <property type="term" value="F:structural constituent of ribosome"/>
    <property type="evidence" value="ECO:0000318"/>
    <property type="project" value="GO_Central"/>
</dbReference>
<dbReference type="GO" id="GO:0006412">
    <property type="term" value="P:translation"/>
    <property type="evidence" value="ECO:0007669"/>
    <property type="project" value="InterPro"/>
</dbReference>
<dbReference type="FunFam" id="3.30.70.330:FF:000035">
    <property type="entry name" value="60S ribosomal protein L23a"/>
    <property type="match status" value="1"/>
</dbReference>
<dbReference type="Gene3D" id="3.30.70.330">
    <property type="match status" value="1"/>
</dbReference>
<dbReference type="HAMAP" id="MF_01369_A">
    <property type="entry name" value="Ribosomal_uL23_A"/>
    <property type="match status" value="1"/>
</dbReference>
<dbReference type="InterPro" id="IPR012677">
    <property type="entry name" value="Nucleotide-bd_a/b_plait_sf"/>
</dbReference>
<dbReference type="InterPro" id="IPR019985">
    <property type="entry name" value="Ribosomal_uL23"/>
</dbReference>
<dbReference type="InterPro" id="IPR013025">
    <property type="entry name" value="Ribosomal_uL23-like"/>
</dbReference>
<dbReference type="InterPro" id="IPR012678">
    <property type="entry name" value="Ribosomal_uL23/eL15/eS24_sf"/>
</dbReference>
<dbReference type="InterPro" id="IPR001014">
    <property type="entry name" value="Ribosomal_uL23_CS"/>
</dbReference>
<dbReference type="InterPro" id="IPR005633">
    <property type="entry name" value="Ribosomal_uL23_N"/>
</dbReference>
<dbReference type="NCBIfam" id="NF011118">
    <property type="entry name" value="PRK14548.1"/>
    <property type="match status" value="1"/>
</dbReference>
<dbReference type="NCBIfam" id="TIGR03636">
    <property type="entry name" value="uL23_arch"/>
    <property type="match status" value="1"/>
</dbReference>
<dbReference type="PANTHER" id="PTHR11620">
    <property type="entry name" value="60S RIBOSOMAL PROTEIN L23A"/>
    <property type="match status" value="1"/>
</dbReference>
<dbReference type="Pfam" id="PF00276">
    <property type="entry name" value="Ribosomal_L23"/>
    <property type="match status" value="1"/>
</dbReference>
<dbReference type="Pfam" id="PF03939">
    <property type="entry name" value="Ribosomal_L23eN"/>
    <property type="match status" value="1"/>
</dbReference>
<dbReference type="SUPFAM" id="SSF54189">
    <property type="entry name" value="Ribosomal proteins S24e, L23 and L15e"/>
    <property type="match status" value="1"/>
</dbReference>
<dbReference type="PROSITE" id="PS00050">
    <property type="entry name" value="RIBOSOMAL_L23"/>
    <property type="match status" value="1"/>
</dbReference>
<gene>
    <name type="primary">RPL23A</name>
    <name type="synonym">RPL25</name>
</gene>
<keyword id="KW-0002">3D-structure</keyword>
<keyword id="KW-1185">Reference proteome</keyword>
<keyword id="KW-0687">Ribonucleoprotein</keyword>
<keyword id="KW-0689">Ribosomal protein</keyword>
<keyword id="KW-0694">RNA-binding</keyword>
<keyword id="KW-0699">rRNA-binding</keyword>
<organism>
    <name type="scientific">Nicotiana tabacum</name>
    <name type="common">Common tobacco</name>
    <dbReference type="NCBI Taxonomy" id="4097"/>
    <lineage>
        <taxon>Eukaryota</taxon>
        <taxon>Viridiplantae</taxon>
        <taxon>Streptophyta</taxon>
        <taxon>Embryophyta</taxon>
        <taxon>Tracheophyta</taxon>
        <taxon>Spermatophyta</taxon>
        <taxon>Magnoliopsida</taxon>
        <taxon>eudicotyledons</taxon>
        <taxon>Gunneridae</taxon>
        <taxon>Pentapetalae</taxon>
        <taxon>asterids</taxon>
        <taxon>lamiids</taxon>
        <taxon>Solanales</taxon>
        <taxon>Solanaceae</taxon>
        <taxon>Nicotianoideae</taxon>
        <taxon>Nicotianeae</taxon>
        <taxon>Nicotiana</taxon>
    </lineage>
</organism>
<comment type="function">
    <text evidence="1">This protein binds to a specific region on the 26S rRNA.</text>
</comment>
<comment type="similarity">
    <text evidence="3">Belongs to the universal ribosomal protein uL23 family.</text>
</comment>
<evidence type="ECO:0000250" key="1"/>
<evidence type="ECO:0000256" key="2">
    <source>
        <dbReference type="SAM" id="MobiDB-lite"/>
    </source>
</evidence>
<evidence type="ECO:0000305" key="3"/>
<feature type="chain" id="PRO_0000129477" description="Large ribosomal subunit protein uL23">
    <location>
        <begin position="1"/>
        <end position="154"/>
    </location>
</feature>
<feature type="region of interest" description="Disordered" evidence="2">
    <location>
        <begin position="1"/>
        <end position="39"/>
    </location>
</feature>
<feature type="compositionally biased region" description="Low complexity" evidence="2">
    <location>
        <begin position="15"/>
        <end position="26"/>
    </location>
</feature>
<accession>Q07761</accession>
<sequence length="154" mass="17281">MAPAKADPSKKSDPKAQAAKVAKAVKSGSTLKKKSQKIRTKVTFHRPKTLKKDRNPKYPRISAPGRNKLDQYGILKYPLTTESAMKKIEDNNTLVFIVDIKADKKKIKDAVKKMYDIQTKKVNTLIRPDGTKKAYVRLTPDYDALDVANKIGII</sequence>